<accession>Q9VPR7</accession>
<evidence type="ECO:0000255" key="1"/>
<evidence type="ECO:0000255" key="2">
    <source>
        <dbReference type="PROSITE-ProRule" id="PRU00498"/>
    </source>
</evidence>
<evidence type="ECO:0000269" key="3">
    <source>
    </source>
</evidence>
<evidence type="ECO:0000269" key="4">
    <source>
    </source>
</evidence>
<evidence type="ECO:0000269" key="5">
    <source>
    </source>
</evidence>
<evidence type="ECO:0000269" key="6">
    <source>
    </source>
</evidence>
<evidence type="ECO:0000303" key="7">
    <source>
    </source>
</evidence>
<evidence type="ECO:0000303" key="8">
    <source>
    </source>
</evidence>
<evidence type="ECO:0000305" key="9"/>
<evidence type="ECO:0000312" key="10">
    <source>
        <dbReference type="EMBL" id="AAL28761.1"/>
    </source>
</evidence>
<evidence type="ECO:0000312" key="11">
    <source>
        <dbReference type="FlyBase" id="FBgn0031268"/>
    </source>
</evidence>
<evidence type="ECO:0000312" key="12">
    <source>
        <dbReference type="Proteomes" id="UP000000803"/>
    </source>
</evidence>
<reference evidence="12" key="1">
    <citation type="journal article" date="2000" name="Science">
        <title>The genome sequence of Drosophila melanogaster.</title>
        <authorList>
            <person name="Adams M.D."/>
            <person name="Celniker S.E."/>
            <person name="Holt R.A."/>
            <person name="Evans C.A."/>
            <person name="Gocayne J.D."/>
            <person name="Amanatides P.G."/>
            <person name="Scherer S.E."/>
            <person name="Li P.W."/>
            <person name="Hoskins R.A."/>
            <person name="Galle R.F."/>
            <person name="George R.A."/>
            <person name="Lewis S.E."/>
            <person name="Richards S."/>
            <person name="Ashburner M."/>
            <person name="Henderson S.N."/>
            <person name="Sutton G.G."/>
            <person name="Wortman J.R."/>
            <person name="Yandell M.D."/>
            <person name="Zhang Q."/>
            <person name="Chen L.X."/>
            <person name="Brandon R.C."/>
            <person name="Rogers Y.-H.C."/>
            <person name="Blazej R.G."/>
            <person name="Champe M."/>
            <person name="Pfeiffer B.D."/>
            <person name="Wan K.H."/>
            <person name="Doyle C."/>
            <person name="Baxter E.G."/>
            <person name="Helt G."/>
            <person name="Nelson C.R."/>
            <person name="Miklos G.L.G."/>
            <person name="Abril J.F."/>
            <person name="Agbayani A."/>
            <person name="An H.-J."/>
            <person name="Andrews-Pfannkoch C."/>
            <person name="Baldwin D."/>
            <person name="Ballew R.M."/>
            <person name="Basu A."/>
            <person name="Baxendale J."/>
            <person name="Bayraktaroglu L."/>
            <person name="Beasley E.M."/>
            <person name="Beeson K.Y."/>
            <person name="Benos P.V."/>
            <person name="Berman B.P."/>
            <person name="Bhandari D."/>
            <person name="Bolshakov S."/>
            <person name="Borkova D."/>
            <person name="Botchan M.R."/>
            <person name="Bouck J."/>
            <person name="Brokstein P."/>
            <person name="Brottier P."/>
            <person name="Burtis K.C."/>
            <person name="Busam D.A."/>
            <person name="Butler H."/>
            <person name="Cadieu E."/>
            <person name="Center A."/>
            <person name="Chandra I."/>
            <person name="Cherry J.M."/>
            <person name="Cawley S."/>
            <person name="Dahlke C."/>
            <person name="Davenport L.B."/>
            <person name="Davies P."/>
            <person name="de Pablos B."/>
            <person name="Delcher A."/>
            <person name="Deng Z."/>
            <person name="Mays A.D."/>
            <person name="Dew I."/>
            <person name="Dietz S.M."/>
            <person name="Dodson K."/>
            <person name="Doup L.E."/>
            <person name="Downes M."/>
            <person name="Dugan-Rocha S."/>
            <person name="Dunkov B.C."/>
            <person name="Dunn P."/>
            <person name="Durbin K.J."/>
            <person name="Evangelista C.C."/>
            <person name="Ferraz C."/>
            <person name="Ferriera S."/>
            <person name="Fleischmann W."/>
            <person name="Fosler C."/>
            <person name="Gabrielian A.E."/>
            <person name="Garg N.S."/>
            <person name="Gelbart W.M."/>
            <person name="Glasser K."/>
            <person name="Glodek A."/>
            <person name="Gong F."/>
            <person name="Gorrell J.H."/>
            <person name="Gu Z."/>
            <person name="Guan P."/>
            <person name="Harris M."/>
            <person name="Harris N.L."/>
            <person name="Harvey D.A."/>
            <person name="Heiman T.J."/>
            <person name="Hernandez J.R."/>
            <person name="Houck J."/>
            <person name="Hostin D."/>
            <person name="Houston K.A."/>
            <person name="Howland T.J."/>
            <person name="Wei M.-H."/>
            <person name="Ibegwam C."/>
            <person name="Jalali M."/>
            <person name="Kalush F."/>
            <person name="Karpen G.H."/>
            <person name="Ke Z."/>
            <person name="Kennison J.A."/>
            <person name="Ketchum K.A."/>
            <person name="Kimmel B.E."/>
            <person name="Kodira C.D."/>
            <person name="Kraft C.L."/>
            <person name="Kravitz S."/>
            <person name="Kulp D."/>
            <person name="Lai Z."/>
            <person name="Lasko P."/>
            <person name="Lei Y."/>
            <person name="Levitsky A.A."/>
            <person name="Li J.H."/>
            <person name="Li Z."/>
            <person name="Liang Y."/>
            <person name="Lin X."/>
            <person name="Liu X."/>
            <person name="Mattei B."/>
            <person name="McIntosh T.C."/>
            <person name="McLeod M.P."/>
            <person name="McPherson D."/>
            <person name="Merkulov G."/>
            <person name="Milshina N.V."/>
            <person name="Mobarry C."/>
            <person name="Morris J."/>
            <person name="Moshrefi A."/>
            <person name="Mount S.M."/>
            <person name="Moy M."/>
            <person name="Murphy B."/>
            <person name="Murphy L."/>
            <person name="Muzny D.M."/>
            <person name="Nelson D.L."/>
            <person name="Nelson D.R."/>
            <person name="Nelson K.A."/>
            <person name="Nixon K."/>
            <person name="Nusskern D.R."/>
            <person name="Pacleb J.M."/>
            <person name="Palazzolo M."/>
            <person name="Pittman G.S."/>
            <person name="Pan S."/>
            <person name="Pollard J."/>
            <person name="Puri V."/>
            <person name="Reese M.G."/>
            <person name="Reinert K."/>
            <person name="Remington K."/>
            <person name="Saunders R.D.C."/>
            <person name="Scheeler F."/>
            <person name="Shen H."/>
            <person name="Shue B.C."/>
            <person name="Siden-Kiamos I."/>
            <person name="Simpson M."/>
            <person name="Skupski M.P."/>
            <person name="Smith T.J."/>
            <person name="Spier E."/>
            <person name="Spradling A.C."/>
            <person name="Stapleton M."/>
            <person name="Strong R."/>
            <person name="Sun E."/>
            <person name="Svirskas R."/>
            <person name="Tector C."/>
            <person name="Turner R."/>
            <person name="Venter E."/>
            <person name="Wang A.H."/>
            <person name="Wang X."/>
            <person name="Wang Z.-Y."/>
            <person name="Wassarman D.A."/>
            <person name="Weinstock G.M."/>
            <person name="Weissenbach J."/>
            <person name="Williams S.M."/>
            <person name="Woodage T."/>
            <person name="Worley K.C."/>
            <person name="Wu D."/>
            <person name="Yang S."/>
            <person name="Yao Q.A."/>
            <person name="Ye J."/>
            <person name="Yeh R.-F."/>
            <person name="Zaveri J.S."/>
            <person name="Zhan M."/>
            <person name="Zhang G."/>
            <person name="Zhao Q."/>
            <person name="Zheng L."/>
            <person name="Zheng X.H."/>
            <person name="Zhong F.N."/>
            <person name="Zhong W."/>
            <person name="Zhou X."/>
            <person name="Zhu S.C."/>
            <person name="Zhu X."/>
            <person name="Smith H.O."/>
            <person name="Gibbs R.A."/>
            <person name="Myers E.W."/>
            <person name="Rubin G.M."/>
            <person name="Venter J.C."/>
        </authorList>
    </citation>
    <scope>NUCLEOTIDE SEQUENCE [LARGE SCALE GENOMIC DNA]</scope>
    <source>
        <strain evidence="12">Berkeley</strain>
    </source>
</reference>
<reference evidence="12" key="2">
    <citation type="journal article" date="2002" name="Genome Biol.">
        <title>Annotation of the Drosophila melanogaster euchromatic genome: a systematic review.</title>
        <authorList>
            <person name="Misra S."/>
            <person name="Crosby M.A."/>
            <person name="Mungall C.J."/>
            <person name="Matthews B.B."/>
            <person name="Campbell K.S."/>
            <person name="Hradecky P."/>
            <person name="Huang Y."/>
            <person name="Kaminker J.S."/>
            <person name="Millburn G.H."/>
            <person name="Prochnik S.E."/>
            <person name="Smith C.D."/>
            <person name="Tupy J.L."/>
            <person name="Whitfield E.J."/>
            <person name="Bayraktaroglu L."/>
            <person name="Berman B.P."/>
            <person name="Bettencourt B.R."/>
            <person name="Celniker S.E."/>
            <person name="de Grey A.D.N.J."/>
            <person name="Drysdale R.A."/>
            <person name="Harris N.L."/>
            <person name="Richter J."/>
            <person name="Russo S."/>
            <person name="Schroeder A.J."/>
            <person name="Shu S.Q."/>
            <person name="Stapleton M."/>
            <person name="Yamada C."/>
            <person name="Ashburner M."/>
            <person name="Gelbart W.M."/>
            <person name="Rubin G.M."/>
            <person name="Lewis S.E."/>
        </authorList>
    </citation>
    <scope>GENOME REANNOTATION</scope>
    <source>
        <strain evidence="12">Berkeley</strain>
    </source>
</reference>
<reference evidence="10" key="3">
    <citation type="journal article" date="2002" name="Genome Biol.">
        <title>A Drosophila full-length cDNA resource.</title>
        <authorList>
            <person name="Stapleton M."/>
            <person name="Carlson J.W."/>
            <person name="Brokstein P."/>
            <person name="Yu C."/>
            <person name="Champe M."/>
            <person name="George R.A."/>
            <person name="Guarin H."/>
            <person name="Kronmiller B."/>
            <person name="Pacleb J.M."/>
            <person name="Park S."/>
            <person name="Wan K.H."/>
            <person name="Rubin G.M."/>
            <person name="Celniker S.E."/>
        </authorList>
    </citation>
    <scope>NUCLEOTIDE SEQUENCE [LARGE SCALE MRNA]</scope>
    <source>
        <strain evidence="10">Berkeley</strain>
        <tissue evidence="10">Embryo</tissue>
    </source>
</reference>
<reference evidence="9" key="4">
    <citation type="journal article" date="2010" name="Development">
        <title>Crooked, coiled and crimpled are three Ly6-like proteins required for proper localization of septate junction components.</title>
        <authorList>
            <person name="Nilton A."/>
            <person name="Oshima K."/>
            <person name="Zare F."/>
            <person name="Byri S."/>
            <person name="Nannmark U."/>
            <person name="Nyberg K.G."/>
            <person name="Fehon R.G."/>
            <person name="Uv A.E."/>
        </authorList>
    </citation>
    <scope>FUNCTION</scope>
    <scope>SUBCELLULAR LOCATION</scope>
    <scope>DISRUPTION PHENOTYPE</scope>
</reference>
<reference evidence="9" key="5">
    <citation type="journal article" date="2010" name="Genetics">
        <title>Genetic screen in Drosophila melanogaster uncovers a novel set of genes required for embryonic epithelial repair.</title>
        <authorList>
            <person name="Campos I."/>
            <person name="Geiger J.A."/>
            <person name="Santos A.C."/>
            <person name="Carlos V."/>
            <person name="Jacinto A."/>
        </authorList>
    </citation>
    <scope>FUNCTION</scope>
</reference>
<reference evidence="9" key="6">
    <citation type="journal article" date="2011" name="J. Neurosci.">
        <title>The CD59 family member Leaky/Coiled is required for the establishment of the blood-brain barrier in Drosophila.</title>
        <authorList>
            <person name="Syed M.H."/>
            <person name="Krudewig A."/>
            <person name="Engelen D."/>
            <person name="Stork T."/>
            <person name="Klaembt C."/>
        </authorList>
    </citation>
    <scope>FUNCTION</scope>
    <scope>SUBCELLULAR LOCATION</scope>
    <scope>TISSUE SPECIFICITY</scope>
    <scope>GPI-ANCHOR</scope>
    <scope>DISRUPTION PHENOTYPE</scope>
</reference>
<reference evidence="9" key="7">
    <citation type="journal article" date="2011" name="PLoS ONE">
        <title>The Ly6 protein coiled is required for septate junction and blood brain barrier organisation in Drosophila.</title>
        <authorList>
            <person name="Hijazi A."/>
            <person name="Haenlin M."/>
            <person name="Waltzer L."/>
            <person name="Roch F."/>
        </authorList>
    </citation>
    <scope>FUNCTION</scope>
    <scope>SUBCELLULAR LOCATION</scope>
    <scope>DEVELOPMENTAL STAGE</scope>
    <scope>DISRUPTION PHENOTYPE</scope>
</reference>
<keyword id="KW-0965">Cell junction</keyword>
<keyword id="KW-1003">Cell membrane</keyword>
<keyword id="KW-1015">Disulfide bond</keyword>
<keyword id="KW-0256">Endoplasmic reticulum</keyword>
<keyword id="KW-0967">Endosome</keyword>
<keyword id="KW-0325">Glycoprotein</keyword>
<keyword id="KW-0336">GPI-anchor</keyword>
<keyword id="KW-0449">Lipoprotein</keyword>
<keyword id="KW-0472">Membrane</keyword>
<keyword id="KW-1185">Reference proteome</keyword>
<keyword id="KW-0732">Signal</keyword>
<keyword id="KW-0812">Transmembrane</keyword>
<keyword id="KW-1133">Transmembrane helix</keyword>
<dbReference type="EMBL" id="AE014134">
    <property type="protein sequence ID" value="AAF51476.1"/>
    <property type="molecule type" value="Genomic_DNA"/>
</dbReference>
<dbReference type="EMBL" id="AE014134">
    <property type="protein sequence ID" value="AGB92375.1"/>
    <property type="molecule type" value="Genomic_DNA"/>
</dbReference>
<dbReference type="EMBL" id="AY061213">
    <property type="protein sequence ID" value="AAL28761.1"/>
    <property type="molecule type" value="mRNA"/>
</dbReference>
<dbReference type="RefSeq" id="NP_001259838.1">
    <property type="nucleotide sequence ID" value="NM_001272909.1"/>
</dbReference>
<dbReference type="RefSeq" id="NP_608536.1">
    <property type="nucleotide sequence ID" value="NM_134692.5"/>
</dbReference>
<dbReference type="FunCoup" id="Q9VPR7">
    <property type="interactions" value="195"/>
</dbReference>
<dbReference type="IntAct" id="Q9VPR7">
    <property type="interactions" value="115"/>
</dbReference>
<dbReference type="STRING" id="7227.FBpp0301725"/>
<dbReference type="GlyGen" id="Q9VPR7">
    <property type="glycosylation" value="1 site"/>
</dbReference>
<dbReference type="PaxDb" id="7227-FBpp0301725"/>
<dbReference type="DNASU" id="33237"/>
<dbReference type="EnsemblMetazoa" id="FBtr0078069">
    <property type="protein sequence ID" value="FBpp0077729"/>
    <property type="gene ID" value="FBgn0031268"/>
</dbReference>
<dbReference type="EnsemblMetazoa" id="FBtr0310022">
    <property type="protein sequence ID" value="FBpp0301725"/>
    <property type="gene ID" value="FBgn0031268"/>
</dbReference>
<dbReference type="GeneID" id="33237"/>
<dbReference type="KEGG" id="dme:Dmel_CG2813"/>
<dbReference type="UCSC" id="CG2813-RA">
    <property type="organism name" value="d. melanogaster"/>
</dbReference>
<dbReference type="AGR" id="FB:FBgn0031268"/>
<dbReference type="CTD" id="33237"/>
<dbReference type="FlyBase" id="FBgn0031268">
    <property type="gene designation" value="cold"/>
</dbReference>
<dbReference type="VEuPathDB" id="VectorBase:FBgn0031268"/>
<dbReference type="eggNOG" id="ENOG502S3JS">
    <property type="taxonomic scope" value="Eukaryota"/>
</dbReference>
<dbReference type="HOGENOM" id="CLU_146225_0_0_1"/>
<dbReference type="InParanoid" id="Q9VPR7"/>
<dbReference type="OMA" id="TIKTCEY"/>
<dbReference type="OrthoDB" id="6278121at2759"/>
<dbReference type="BioGRID-ORCS" id="33237">
    <property type="hits" value="0 hits in 1 CRISPR screen"/>
</dbReference>
<dbReference type="GenomeRNAi" id="33237"/>
<dbReference type="Proteomes" id="UP000000803">
    <property type="component" value="Chromosome 2L"/>
</dbReference>
<dbReference type="Bgee" id="FBgn0031268">
    <property type="expression patterns" value="Expressed in eye disc (Drosophila) and 135 other cell types or tissues"/>
</dbReference>
<dbReference type="GO" id="GO:0005737">
    <property type="term" value="C:cytoplasm"/>
    <property type="evidence" value="ECO:0000314"/>
    <property type="project" value="FlyBase"/>
</dbReference>
<dbReference type="GO" id="GO:0005789">
    <property type="term" value="C:endoplasmic reticulum membrane"/>
    <property type="evidence" value="ECO:0007669"/>
    <property type="project" value="UniProtKB-SubCell"/>
</dbReference>
<dbReference type="GO" id="GO:0010008">
    <property type="term" value="C:endosome membrane"/>
    <property type="evidence" value="ECO:0007669"/>
    <property type="project" value="UniProtKB-SubCell"/>
</dbReference>
<dbReference type="GO" id="GO:0005886">
    <property type="term" value="C:plasma membrane"/>
    <property type="evidence" value="ECO:0007669"/>
    <property type="project" value="UniProtKB-SubCell"/>
</dbReference>
<dbReference type="GO" id="GO:0005918">
    <property type="term" value="C:septate junction"/>
    <property type="evidence" value="ECO:0007669"/>
    <property type="project" value="UniProtKB-SubCell"/>
</dbReference>
<dbReference type="GO" id="GO:0098552">
    <property type="term" value="C:side of membrane"/>
    <property type="evidence" value="ECO:0007669"/>
    <property type="project" value="UniProtKB-KW"/>
</dbReference>
<dbReference type="GO" id="GO:0060856">
    <property type="term" value="P:establishment of blood-brain barrier"/>
    <property type="evidence" value="ECO:0000314"/>
    <property type="project" value="FlyBase"/>
</dbReference>
<dbReference type="GO" id="GO:0035633">
    <property type="term" value="P:maintenance of blood-brain barrier"/>
    <property type="evidence" value="ECO:0000314"/>
    <property type="project" value="FlyBase"/>
</dbReference>
<dbReference type="GO" id="GO:0035151">
    <property type="term" value="P:regulation of tube size, open tracheal system"/>
    <property type="evidence" value="ECO:0000315"/>
    <property type="project" value="FlyBase"/>
</dbReference>
<dbReference type="GO" id="GO:0019991">
    <property type="term" value="P:septate junction assembly"/>
    <property type="evidence" value="ECO:0000314"/>
    <property type="project" value="FlyBase"/>
</dbReference>
<dbReference type="GO" id="GO:0042060">
    <property type="term" value="P:wound healing"/>
    <property type="evidence" value="ECO:0007001"/>
    <property type="project" value="FlyBase"/>
</dbReference>
<dbReference type="CDD" id="cd23599">
    <property type="entry name" value="TFP_LU_ECD_Cold"/>
    <property type="match status" value="1"/>
</dbReference>
<dbReference type="Gene3D" id="2.10.60.10">
    <property type="entry name" value="CD59"/>
    <property type="match status" value="1"/>
</dbReference>
<dbReference type="InterPro" id="IPR045860">
    <property type="entry name" value="Snake_toxin-like_sf"/>
</dbReference>
<dbReference type="PANTHER" id="PTHR10036">
    <property type="entry name" value="CD59 GLYCOPROTEIN"/>
    <property type="match status" value="1"/>
</dbReference>
<dbReference type="PANTHER" id="PTHR10036:SF3">
    <property type="entry name" value="PROTEIN SLEEPLESS-RELATED"/>
    <property type="match status" value="1"/>
</dbReference>
<dbReference type="SUPFAM" id="SSF57302">
    <property type="entry name" value="Snake toxin-like"/>
    <property type="match status" value="1"/>
</dbReference>
<name>COLD_DROME</name>
<feature type="signal peptide" evidence="1">
    <location>
        <begin position="1"/>
        <end position="25"/>
    </location>
</feature>
<feature type="chain" id="PRO_5015100515" description="UPAR/Ly6 domain-containing protein cold" evidence="1">
    <location>
        <begin position="26"/>
        <end position="124"/>
    </location>
</feature>
<feature type="propeptide" id="PRO_0000459697" description="Removed in mature form" evidence="1">
    <location>
        <begin position="125"/>
        <end position="153"/>
    </location>
</feature>
<feature type="topological domain" description="Extracellular" evidence="9">
    <location>
        <begin position="26"/>
        <end position="130"/>
    </location>
</feature>
<feature type="transmembrane region" description="Helical" evidence="1">
    <location>
        <begin position="131"/>
        <end position="151"/>
    </location>
</feature>
<feature type="topological domain" description="Cytoplasmic" evidence="9">
    <location>
        <begin position="152"/>
        <end position="153"/>
    </location>
</feature>
<feature type="lipid moiety-binding region" description="GPI-anchor amidated serine" evidence="1">
    <location>
        <position position="124"/>
    </location>
</feature>
<feature type="glycosylation site" description="N-linked (GlcNAc...) asparagine" evidence="2">
    <location>
        <position position="33"/>
    </location>
</feature>
<feature type="disulfide bond" evidence="9">
    <location>
        <begin position="28"/>
        <end position="55"/>
    </location>
</feature>
<feature type="disulfide bond" evidence="9">
    <location>
        <begin position="31"/>
        <end position="41"/>
    </location>
</feature>
<feature type="disulfide bond" evidence="9">
    <location>
        <begin position="48"/>
        <end position="81"/>
    </location>
</feature>
<feature type="disulfide bond" evidence="9">
    <location>
        <begin position="87"/>
        <end position="112"/>
    </location>
</feature>
<feature type="disulfide bond" evidence="9">
    <location>
        <begin position="99"/>
        <end position="109"/>
    </location>
</feature>
<feature type="disulfide bond" evidence="9">
    <location>
        <begin position="113"/>
        <end position="118"/>
    </location>
</feature>
<comment type="function">
    <text evidence="3 4 5 6">Required for septate junction assembly, possibly by organizing the preassembly and transport of septate junction proteins such as dlg1/disks large 1 and Nrx-IV/Neurexin-IV (PubMed:20570942, PubMed:21423573, PubMed:21613501). Involved in paracellular barrier functions of trachea, hindgut and salivary gland mediated by epithelial cell septate junctions (PubMed:20570942, PubMed:21423573). Involved in paracellular barrier functions of the hemolymph-brain barrier (insect blood-brain barrier) mediated by glial cell septate junctions (PubMed:21423573, PubMed:21613501). Required for maintenance of septate junctions in imaginal disk epithelial cells (PubMed:21423573). Involved in the epithelial cell wound-healing response (PubMed:19884309). Directly or indirectly mediates cell-cell adhesion during septate junction formation (PubMed:21613501).</text>
</comment>
<comment type="subcellular location">
    <subcellularLocation>
        <location evidence="4">Endosome membrane</location>
        <topology evidence="6">Lipid-anchor</topology>
        <topology evidence="6">GPI-anchor</topology>
        <orientation evidence="9">Lumenal side</orientation>
    </subcellularLocation>
    <subcellularLocation>
        <location evidence="5">Endoplasmic reticulum membrane</location>
        <topology evidence="6">Lipid-anchor</topology>
        <topology evidence="6">GPI-anchor</topology>
        <orientation evidence="9">Lumenal side</orientation>
    </subcellularLocation>
    <subcellularLocation>
        <location evidence="5 6">Cell membrane</location>
        <topology evidence="6">Lipid-anchor</topology>
        <topology evidence="6">GPI-anchor</topology>
        <orientation evidence="6">Extracellular side</orientation>
    </subcellularLocation>
    <subcellularLocation>
        <location evidence="5">Cell junction</location>
        <location evidence="5">Septate junction</location>
    </subcellularLocation>
</comment>
<comment type="tissue specificity">
    <text evidence="6">Expressed in all tissues that form septate junctions, including hindgut, trachea, epidermis and dorsal pouch (PubMed:21613501). Expressed in subperineurial glial cells that form the hemolymph-brain barrier of the central nervous system (PubMed:21613501).</text>
</comment>
<comment type="developmental stage">
    <text evidence="5">Expressed both maternally and zygotically (PubMed:21423573). Uniform expression in early stage 5 embryos, probably from maternal contribution (PubMed:21423573). After cellularization expressed in the ectoderm (PubMed:21423573). In stage 11 embryos accumulates in the fore and hindgut primordia (PubMed:21423573). High levels of expression in epithelial cells of stage 13 embryo tracheal network, foregut, hindgut and salivary glands (PubMed:21423573). Low levels of expression in epidermis and ventral cord nerve track glial cells in late stage 13-16 embryos (PubMed:21423573).</text>
</comment>
<comment type="PTM">
    <text evidence="6">GPI-anchored.</text>
</comment>
<comment type="disruption phenotype">
    <text evidence="4 5 6">Embryonic lethal (PubMed:21423573). Aberrant tracheal dorsal trunk development resulting in tracheal tube size defects (PubMed:20570942, PubMed:21423573, PubMed:21613501). Compromised epithelial paracellular barrier function in trachea due to reduced and irregular septate junction formation (PubMed:20570942, PubMed:21613501). Compromised barrier function between the hemolymph and central nervous system (the insect blood-brain barrier) (PubMed:21613501).</text>
</comment>
<comment type="miscellaneous">
    <text evidence="7">The name coiled reflects the excessively long and convoluted tracheal dorsal trunk phenotype of mutant larvae.</text>
</comment>
<comment type="similarity">
    <text evidence="9">Belongs to the snake toxin-like superfamily.</text>
</comment>
<protein>
    <recommendedName>
        <fullName evidence="9">UPAR/Ly6 domain-containing protein cold</fullName>
    </recommendedName>
    <alternativeName>
        <fullName evidence="7">Protein coiled</fullName>
    </alternativeName>
</protein>
<organism evidence="12">
    <name type="scientific">Drosophila melanogaster</name>
    <name type="common">Fruit fly</name>
    <dbReference type="NCBI Taxonomy" id="7227"/>
    <lineage>
        <taxon>Eukaryota</taxon>
        <taxon>Metazoa</taxon>
        <taxon>Ecdysozoa</taxon>
        <taxon>Arthropoda</taxon>
        <taxon>Hexapoda</taxon>
        <taxon>Insecta</taxon>
        <taxon>Pterygota</taxon>
        <taxon>Neoptera</taxon>
        <taxon>Endopterygota</taxon>
        <taxon>Diptera</taxon>
        <taxon>Brachycera</taxon>
        <taxon>Muscomorpha</taxon>
        <taxon>Ephydroidea</taxon>
        <taxon>Drosophilidae</taxon>
        <taxon>Drosophila</taxon>
        <taxon>Sophophora</taxon>
    </lineage>
</organism>
<proteinExistence type="evidence at protein level"/>
<sequence length="153" mass="17429">MKSWEIAVVLVAAVYLCSQVNFVAGLECYVCSNQTGNTEKCLNTIKTCEPFENVCGTEIRWGSQPYFSEGALKQYYVSKRCMTKEQCQSKRKRYMQLYCTHIWYEDWACNECCKGDRCNYFVISGAPSRQGYGVCLTLLTALLGLGSWLIPRS</sequence>
<gene>
    <name evidence="11" type="primary">cold</name>
    <name evidence="8" type="synonym">leaky</name>
    <name evidence="11" type="ORF">CG2813</name>
</gene>